<dbReference type="EMBL" id="BX571857">
    <property type="protein sequence ID" value="CAG41845.1"/>
    <property type="molecule type" value="Genomic_DNA"/>
</dbReference>
<dbReference type="SMR" id="Q6GD21"/>
<dbReference type="KEGG" id="sas:SAS0078"/>
<dbReference type="HOGENOM" id="CLU_017624_1_0_9"/>
<dbReference type="GO" id="GO:0003700">
    <property type="term" value="F:DNA-binding transcription factor activity"/>
    <property type="evidence" value="ECO:0007669"/>
    <property type="project" value="InterPro"/>
</dbReference>
<dbReference type="GO" id="GO:0043565">
    <property type="term" value="F:sequence-specific DNA binding"/>
    <property type="evidence" value="ECO:0007669"/>
    <property type="project" value="InterPro"/>
</dbReference>
<dbReference type="Gene3D" id="3.20.20.80">
    <property type="entry name" value="Glycosidases"/>
    <property type="match status" value="1"/>
</dbReference>
<dbReference type="Gene3D" id="2.60.40.1500">
    <property type="entry name" value="Glycosyl hydrolase domain, family 39"/>
    <property type="match status" value="1"/>
</dbReference>
<dbReference type="Gene3D" id="1.10.10.60">
    <property type="entry name" value="Homeodomain-like"/>
    <property type="match status" value="2"/>
</dbReference>
<dbReference type="InterPro" id="IPR017853">
    <property type="entry name" value="Glycoside_hydrolase_SF"/>
</dbReference>
<dbReference type="InterPro" id="IPR009057">
    <property type="entry name" value="Homeodomain-like_sf"/>
</dbReference>
<dbReference type="InterPro" id="IPR037923">
    <property type="entry name" value="HTH-like"/>
</dbReference>
<dbReference type="InterPro" id="IPR018060">
    <property type="entry name" value="HTH_AraC"/>
</dbReference>
<dbReference type="InterPro" id="IPR020449">
    <property type="entry name" value="Tscrpt_reg_AraC-type_HTH"/>
</dbReference>
<dbReference type="NCBIfam" id="NF047455">
    <property type="entry name" value="TF_Staph_AryK"/>
    <property type="match status" value="1"/>
</dbReference>
<dbReference type="PANTHER" id="PTHR43280">
    <property type="entry name" value="ARAC-FAMILY TRANSCRIPTIONAL REGULATOR"/>
    <property type="match status" value="1"/>
</dbReference>
<dbReference type="PANTHER" id="PTHR43280:SF28">
    <property type="entry name" value="HTH-TYPE TRANSCRIPTIONAL ACTIVATOR RHAS"/>
    <property type="match status" value="1"/>
</dbReference>
<dbReference type="Pfam" id="PF12833">
    <property type="entry name" value="HTH_18"/>
    <property type="match status" value="1"/>
</dbReference>
<dbReference type="PRINTS" id="PR00032">
    <property type="entry name" value="HTHARAC"/>
</dbReference>
<dbReference type="SMART" id="SM00342">
    <property type="entry name" value="HTH_ARAC"/>
    <property type="match status" value="1"/>
</dbReference>
<dbReference type="SUPFAM" id="SSF51445">
    <property type="entry name" value="(Trans)glycosidases"/>
    <property type="match status" value="1"/>
</dbReference>
<dbReference type="SUPFAM" id="SSF51011">
    <property type="entry name" value="Glycosyl hydrolase domain"/>
    <property type="match status" value="1"/>
</dbReference>
<dbReference type="SUPFAM" id="SSF46689">
    <property type="entry name" value="Homeodomain-like"/>
    <property type="match status" value="2"/>
</dbReference>
<dbReference type="SUPFAM" id="SSF51215">
    <property type="entry name" value="Regulatory protein AraC"/>
    <property type="match status" value="1"/>
</dbReference>
<dbReference type="PROSITE" id="PS01124">
    <property type="entry name" value="HTH_ARAC_FAMILY_2"/>
    <property type="match status" value="1"/>
</dbReference>
<sequence>MQRDYLIRVETESMPDFKRLNGLMIGFVIKGEAHIYDENNMTQCNSGDIFIINHRDLYRFQLQQDGIICYIQFQMKYLADKFDDAHCLYFHLTDATTTKNIHQLRNIMARLVSTHIRHNELSKLTEQQLVIQLLMHMIHYVPRTYHSNQSILNDDKVNQVCDYIELHFHEDLSLSELSEYVGWSESHLSKKFTESLGVGFQHFLNTTRIEHAKLDLTYTDETITDIALQNGFSSAASFARTFKHFTHQTPKQYRGDRPAITENQQSAQHNYHDRELILLLNDYIEEMNHFIEDIEKMNYKEIAFKPTNQQLNQFNHIIQVGYLRNLLNTQYQSQLLTCHHDFQVNEVLAYDVMPYIMKKLNAPFTYDAEISNIFYDIDLCLDFLLDHNFSLTMHLNQYDSRDYIDAFKVFIHHVALHVSHRKDLKFNLYVTTLHNALIEMIDYFKALFPNGGLYIHLDQATERHLPLLKRLEPHIDHFVFDANSNDAVDFNKMNDDEFKTASQMIINKTNYFIDLIHRHNLKRPLILLNWNTLTGDTFITNGEYFRGGIIIEQLLKLSSKVEGIGYWLNYDLHVSHCKNERDYMNSIELFHQYNGKRPVYFTALLFNKLTSNILYSDDTCIVTGTDSNFQILLYDAKHFNPYLALDNQMNMRATEMIHLNINALEEGMYKIKHFTLDKENGALFNLWRKHHTIHGMDKDSIDYVNRMSFPKLEVYDIDITDTLALNIKMITNGIHLIEVKRYPSS</sequence>
<name>Y078_STAAS</name>
<gene>
    <name type="ordered locus">SAS0078</name>
</gene>
<proteinExistence type="predicted"/>
<protein>
    <recommendedName>
        <fullName>Uncharacterized HTH-type transcriptional regulator SAS0078</fullName>
    </recommendedName>
</protein>
<organism>
    <name type="scientific">Staphylococcus aureus (strain MSSA476)</name>
    <dbReference type="NCBI Taxonomy" id="282459"/>
    <lineage>
        <taxon>Bacteria</taxon>
        <taxon>Bacillati</taxon>
        <taxon>Bacillota</taxon>
        <taxon>Bacilli</taxon>
        <taxon>Bacillales</taxon>
        <taxon>Staphylococcaceae</taxon>
        <taxon>Staphylococcus</taxon>
    </lineage>
</organism>
<feature type="chain" id="PRO_0000194631" description="Uncharacterized HTH-type transcriptional regulator SAS0078">
    <location>
        <begin position="1"/>
        <end position="745"/>
    </location>
</feature>
<feature type="domain" description="HTH araC/xylS-type" evidence="1">
    <location>
        <begin position="158"/>
        <end position="256"/>
    </location>
</feature>
<feature type="DNA-binding region" description="H-T-H motif" evidence="1">
    <location>
        <begin position="175"/>
        <end position="196"/>
    </location>
</feature>
<feature type="DNA-binding region" description="H-T-H motif" evidence="1">
    <location>
        <begin position="223"/>
        <end position="246"/>
    </location>
</feature>
<accession>Q6GD21</accession>
<evidence type="ECO:0000255" key="1">
    <source>
        <dbReference type="PROSITE-ProRule" id="PRU00593"/>
    </source>
</evidence>
<keyword id="KW-0238">DNA-binding</keyword>
<keyword id="KW-0677">Repeat</keyword>
<keyword id="KW-0804">Transcription</keyword>
<keyword id="KW-0805">Transcription regulation</keyword>
<reference key="1">
    <citation type="journal article" date="2004" name="Proc. Natl. Acad. Sci. U.S.A.">
        <title>Complete genomes of two clinical Staphylococcus aureus strains: evidence for the rapid evolution of virulence and drug resistance.</title>
        <authorList>
            <person name="Holden M.T.G."/>
            <person name="Feil E.J."/>
            <person name="Lindsay J.A."/>
            <person name="Peacock S.J."/>
            <person name="Day N.P.J."/>
            <person name="Enright M.C."/>
            <person name="Foster T.J."/>
            <person name="Moore C.E."/>
            <person name="Hurst L."/>
            <person name="Atkin R."/>
            <person name="Barron A."/>
            <person name="Bason N."/>
            <person name="Bentley S.D."/>
            <person name="Chillingworth C."/>
            <person name="Chillingworth T."/>
            <person name="Churcher C."/>
            <person name="Clark L."/>
            <person name="Corton C."/>
            <person name="Cronin A."/>
            <person name="Doggett J."/>
            <person name="Dowd L."/>
            <person name="Feltwell T."/>
            <person name="Hance Z."/>
            <person name="Harris B."/>
            <person name="Hauser H."/>
            <person name="Holroyd S."/>
            <person name="Jagels K."/>
            <person name="James K.D."/>
            <person name="Lennard N."/>
            <person name="Line A."/>
            <person name="Mayes R."/>
            <person name="Moule S."/>
            <person name="Mungall K."/>
            <person name="Ormond D."/>
            <person name="Quail M.A."/>
            <person name="Rabbinowitsch E."/>
            <person name="Rutherford K.M."/>
            <person name="Sanders M."/>
            <person name="Sharp S."/>
            <person name="Simmonds M."/>
            <person name="Stevens K."/>
            <person name="Whitehead S."/>
            <person name="Barrell B.G."/>
            <person name="Spratt B.G."/>
            <person name="Parkhill J."/>
        </authorList>
    </citation>
    <scope>NUCLEOTIDE SEQUENCE [LARGE SCALE GENOMIC DNA]</scope>
    <source>
        <strain>MSSA476</strain>
    </source>
</reference>